<dbReference type="EC" id="2.1.1.182" evidence="1"/>
<dbReference type="EMBL" id="AP006628">
    <property type="protein sequence ID" value="BAD04816.1"/>
    <property type="molecule type" value="Genomic_DNA"/>
</dbReference>
<dbReference type="SMR" id="Q6YPJ4"/>
<dbReference type="STRING" id="262768.PAM_731"/>
<dbReference type="KEGG" id="poy:PAM_731"/>
<dbReference type="eggNOG" id="COG0030">
    <property type="taxonomic scope" value="Bacteria"/>
</dbReference>
<dbReference type="HOGENOM" id="CLU_041220_0_0_14"/>
<dbReference type="BioCyc" id="OYEL262768:G1G26-886-MONOMER"/>
<dbReference type="Proteomes" id="UP000002523">
    <property type="component" value="Chromosome"/>
</dbReference>
<dbReference type="GO" id="GO:0005829">
    <property type="term" value="C:cytosol"/>
    <property type="evidence" value="ECO:0007669"/>
    <property type="project" value="TreeGrafter"/>
</dbReference>
<dbReference type="GO" id="GO:0052908">
    <property type="term" value="F:16S rRNA (adenine(1518)-N(6)/adenine(1519)-N(6))-dimethyltransferase activity"/>
    <property type="evidence" value="ECO:0007669"/>
    <property type="project" value="UniProtKB-EC"/>
</dbReference>
<dbReference type="GO" id="GO:0003723">
    <property type="term" value="F:RNA binding"/>
    <property type="evidence" value="ECO:0007669"/>
    <property type="project" value="UniProtKB-KW"/>
</dbReference>
<dbReference type="Gene3D" id="1.10.8.100">
    <property type="entry name" value="Ribosomal RNA adenine dimethylase-like, domain 2"/>
    <property type="match status" value="1"/>
</dbReference>
<dbReference type="Gene3D" id="3.40.50.150">
    <property type="entry name" value="Vaccinia Virus protein VP39"/>
    <property type="match status" value="1"/>
</dbReference>
<dbReference type="HAMAP" id="MF_00607">
    <property type="entry name" value="16SrRNA_methyltr_A"/>
    <property type="match status" value="1"/>
</dbReference>
<dbReference type="InterPro" id="IPR001737">
    <property type="entry name" value="KsgA/Erm"/>
</dbReference>
<dbReference type="InterPro" id="IPR023165">
    <property type="entry name" value="rRNA_Ade_diMease-like_C"/>
</dbReference>
<dbReference type="InterPro" id="IPR020596">
    <property type="entry name" value="rRNA_Ade_Mease_Trfase_CS"/>
</dbReference>
<dbReference type="InterPro" id="IPR020598">
    <property type="entry name" value="rRNA_Ade_methylase_Trfase_N"/>
</dbReference>
<dbReference type="InterPro" id="IPR011530">
    <property type="entry name" value="rRNA_adenine_dimethylase"/>
</dbReference>
<dbReference type="InterPro" id="IPR029063">
    <property type="entry name" value="SAM-dependent_MTases_sf"/>
</dbReference>
<dbReference type="NCBIfam" id="TIGR00755">
    <property type="entry name" value="ksgA"/>
    <property type="match status" value="1"/>
</dbReference>
<dbReference type="PANTHER" id="PTHR11727">
    <property type="entry name" value="DIMETHYLADENOSINE TRANSFERASE"/>
    <property type="match status" value="1"/>
</dbReference>
<dbReference type="PANTHER" id="PTHR11727:SF7">
    <property type="entry name" value="DIMETHYLADENOSINE TRANSFERASE-RELATED"/>
    <property type="match status" value="1"/>
</dbReference>
<dbReference type="Pfam" id="PF00398">
    <property type="entry name" value="RrnaAD"/>
    <property type="match status" value="1"/>
</dbReference>
<dbReference type="SMART" id="SM00650">
    <property type="entry name" value="rADc"/>
    <property type="match status" value="1"/>
</dbReference>
<dbReference type="SUPFAM" id="SSF53335">
    <property type="entry name" value="S-adenosyl-L-methionine-dependent methyltransferases"/>
    <property type="match status" value="1"/>
</dbReference>
<dbReference type="PROSITE" id="PS01131">
    <property type="entry name" value="RRNA_A_DIMETH"/>
    <property type="match status" value="1"/>
</dbReference>
<dbReference type="PROSITE" id="PS51689">
    <property type="entry name" value="SAM_RNA_A_N6_MT"/>
    <property type="match status" value="1"/>
</dbReference>
<gene>
    <name evidence="1" type="primary">rsmA</name>
    <name evidence="1" type="synonym">ksgA</name>
    <name type="ordered locus">PAM_731</name>
</gene>
<keyword id="KW-0963">Cytoplasm</keyword>
<keyword id="KW-0489">Methyltransferase</keyword>
<keyword id="KW-0694">RNA-binding</keyword>
<keyword id="KW-0698">rRNA processing</keyword>
<keyword id="KW-0949">S-adenosyl-L-methionine</keyword>
<keyword id="KW-0808">Transferase</keyword>
<proteinExistence type="inferred from homology"/>
<comment type="function">
    <text evidence="1">Specifically dimethylates two adjacent adenosines (A1518 and A1519) in the loop of a conserved hairpin near the 3'-end of 16S rRNA in the 30S particle. May play a critical role in biogenesis of 30S subunits.</text>
</comment>
<comment type="catalytic activity">
    <reaction evidence="1">
        <text>adenosine(1518)/adenosine(1519) in 16S rRNA + 4 S-adenosyl-L-methionine = N(6)-dimethyladenosine(1518)/N(6)-dimethyladenosine(1519) in 16S rRNA + 4 S-adenosyl-L-homocysteine + 4 H(+)</text>
        <dbReference type="Rhea" id="RHEA:19609"/>
        <dbReference type="Rhea" id="RHEA-COMP:10232"/>
        <dbReference type="Rhea" id="RHEA-COMP:10233"/>
        <dbReference type="ChEBI" id="CHEBI:15378"/>
        <dbReference type="ChEBI" id="CHEBI:57856"/>
        <dbReference type="ChEBI" id="CHEBI:59789"/>
        <dbReference type="ChEBI" id="CHEBI:74411"/>
        <dbReference type="ChEBI" id="CHEBI:74493"/>
        <dbReference type="EC" id="2.1.1.182"/>
    </reaction>
</comment>
<comment type="subcellular location">
    <subcellularLocation>
        <location evidence="1">Cytoplasm</location>
    </subcellularLocation>
</comment>
<comment type="similarity">
    <text evidence="1">Belongs to the class I-like SAM-binding methyltransferase superfamily. rRNA adenine N(6)-methyltransferase family. RsmA subfamily.</text>
</comment>
<feature type="chain" id="PRO_0000101576" description="Ribosomal RNA small subunit methyltransferase A">
    <location>
        <begin position="1"/>
        <end position="268"/>
    </location>
</feature>
<feature type="binding site" evidence="1">
    <location>
        <position position="12"/>
    </location>
    <ligand>
        <name>S-adenosyl-L-methionine</name>
        <dbReference type="ChEBI" id="CHEBI:59789"/>
    </ligand>
</feature>
<feature type="binding site" evidence="1">
    <location>
        <position position="14"/>
    </location>
    <ligand>
        <name>S-adenosyl-L-methionine</name>
        <dbReference type="ChEBI" id="CHEBI:59789"/>
    </ligand>
</feature>
<feature type="binding site" evidence="1">
    <location>
        <position position="38"/>
    </location>
    <ligand>
        <name>S-adenosyl-L-methionine</name>
        <dbReference type="ChEBI" id="CHEBI:59789"/>
    </ligand>
</feature>
<feature type="binding site" evidence="1">
    <location>
        <position position="59"/>
    </location>
    <ligand>
        <name>S-adenosyl-L-methionine</name>
        <dbReference type="ChEBI" id="CHEBI:59789"/>
    </ligand>
</feature>
<feature type="binding site" evidence="1">
    <location>
        <position position="82"/>
    </location>
    <ligand>
        <name>S-adenosyl-L-methionine</name>
        <dbReference type="ChEBI" id="CHEBI:59789"/>
    </ligand>
</feature>
<feature type="binding site" evidence="1">
    <location>
        <position position="107"/>
    </location>
    <ligand>
        <name>S-adenosyl-L-methionine</name>
        <dbReference type="ChEBI" id="CHEBI:59789"/>
    </ligand>
</feature>
<evidence type="ECO:0000255" key="1">
    <source>
        <dbReference type="HAMAP-Rule" id="MF_00607"/>
    </source>
</evidence>
<protein>
    <recommendedName>
        <fullName evidence="1">Ribosomal RNA small subunit methyltransferase A</fullName>
        <ecNumber evidence="1">2.1.1.182</ecNumber>
    </recommendedName>
    <alternativeName>
        <fullName evidence="1">16S rRNA (adenine(1518)-N(6)/adenine(1519)-N(6))-dimethyltransferase</fullName>
    </alternativeName>
    <alternativeName>
        <fullName evidence="1">16S rRNA dimethyladenosine transferase</fullName>
    </alternativeName>
    <alternativeName>
        <fullName evidence="1">16S rRNA dimethylase</fullName>
    </alternativeName>
    <alternativeName>
        <fullName evidence="1">S-adenosylmethionine-6-N', N'-adenosyl(rRNA) dimethyltransferase</fullName>
    </alternativeName>
</protein>
<accession>Q6YPJ4</accession>
<organism>
    <name type="scientific">Onion yellows phytoplasma (strain OY-M)</name>
    <dbReference type="NCBI Taxonomy" id="262768"/>
    <lineage>
        <taxon>Bacteria</taxon>
        <taxon>Bacillati</taxon>
        <taxon>Mycoplasmatota</taxon>
        <taxon>Mollicutes</taxon>
        <taxon>Acholeplasmatales</taxon>
        <taxon>Acholeplasmataceae</taxon>
        <taxon>Candidatus Phytoplasma</taxon>
        <taxon>16SrI (Aster yellows group)</taxon>
    </lineage>
</organism>
<name>RSMA_ONYPE</name>
<sequence length="268" mass="31099">MHHTTKKKYGQNFLTDVNLLNKIVTKASITDKNVLEIGPGKGALTKIIVPQAKHVLAYEIDATLKPFLNFENHNNVNIIYDDFLKRDLLKDFDHYFSPNSQLSLIGNLPYYITSPILFKIIDTPQINDATIMIQKEVGMRLLAQPNNKNYNALSVIIQFLFSIEKIQEVKRHMFFPAPKVDSIVIKLTKNNNICPTFLQQFIKFVKASFKQKRKTLLNNLSCQFLLSKETIIPFFLQHHIPLQIRAEQVTLETFQKLTVKWFIFFNIS</sequence>
<reference key="1">
    <citation type="journal article" date="2004" name="Nat. Genet.">
        <title>Reductive evolution suggested from the complete genome sequence of a plant-pathogenic phytoplasma.</title>
        <authorList>
            <person name="Oshima K."/>
            <person name="Kakizawa S."/>
            <person name="Nishigawa H."/>
            <person name="Jung H.-Y."/>
            <person name="Wei W."/>
            <person name="Suzuki S."/>
            <person name="Arashida R."/>
            <person name="Nakata D."/>
            <person name="Miyata S."/>
            <person name="Ugaki M."/>
            <person name="Namba S."/>
        </authorList>
    </citation>
    <scope>NUCLEOTIDE SEQUENCE [LARGE SCALE GENOMIC DNA]</scope>
    <source>
        <strain>OY-M</strain>
    </source>
</reference>